<name>FREE1_ARATH</name>
<accession>Q9ASS2</accession>
<accession>Q940J6</accession>
<reference key="1">
    <citation type="journal article" date="2000" name="Nature">
        <title>Sequence and analysis of chromosome 1 of the plant Arabidopsis thaliana.</title>
        <authorList>
            <person name="Theologis A."/>
            <person name="Ecker J.R."/>
            <person name="Palm C.J."/>
            <person name="Federspiel N.A."/>
            <person name="Kaul S."/>
            <person name="White O."/>
            <person name="Alonso J."/>
            <person name="Altafi H."/>
            <person name="Araujo R."/>
            <person name="Bowman C.L."/>
            <person name="Brooks S.Y."/>
            <person name="Buehler E."/>
            <person name="Chan A."/>
            <person name="Chao Q."/>
            <person name="Chen H."/>
            <person name="Cheuk R.F."/>
            <person name="Chin C.W."/>
            <person name="Chung M.K."/>
            <person name="Conn L."/>
            <person name="Conway A.B."/>
            <person name="Conway A.R."/>
            <person name="Creasy T.H."/>
            <person name="Dewar K."/>
            <person name="Dunn P."/>
            <person name="Etgu P."/>
            <person name="Feldblyum T.V."/>
            <person name="Feng J.-D."/>
            <person name="Fong B."/>
            <person name="Fujii C.Y."/>
            <person name="Gill J.E."/>
            <person name="Goldsmith A.D."/>
            <person name="Haas B."/>
            <person name="Hansen N.F."/>
            <person name="Hughes B."/>
            <person name="Huizar L."/>
            <person name="Hunter J.L."/>
            <person name="Jenkins J."/>
            <person name="Johnson-Hopson C."/>
            <person name="Khan S."/>
            <person name="Khaykin E."/>
            <person name="Kim C.J."/>
            <person name="Koo H.L."/>
            <person name="Kremenetskaia I."/>
            <person name="Kurtz D.B."/>
            <person name="Kwan A."/>
            <person name="Lam B."/>
            <person name="Langin-Hooper S."/>
            <person name="Lee A."/>
            <person name="Lee J.M."/>
            <person name="Lenz C.A."/>
            <person name="Li J.H."/>
            <person name="Li Y.-P."/>
            <person name="Lin X."/>
            <person name="Liu S.X."/>
            <person name="Liu Z.A."/>
            <person name="Luros J.S."/>
            <person name="Maiti R."/>
            <person name="Marziali A."/>
            <person name="Militscher J."/>
            <person name="Miranda M."/>
            <person name="Nguyen M."/>
            <person name="Nierman W.C."/>
            <person name="Osborne B.I."/>
            <person name="Pai G."/>
            <person name="Peterson J."/>
            <person name="Pham P.K."/>
            <person name="Rizzo M."/>
            <person name="Rooney T."/>
            <person name="Rowley D."/>
            <person name="Sakano H."/>
            <person name="Salzberg S.L."/>
            <person name="Schwartz J.R."/>
            <person name="Shinn P."/>
            <person name="Southwick A.M."/>
            <person name="Sun H."/>
            <person name="Tallon L.J."/>
            <person name="Tambunga G."/>
            <person name="Toriumi M.J."/>
            <person name="Town C.D."/>
            <person name="Utterback T."/>
            <person name="Van Aken S."/>
            <person name="Vaysberg M."/>
            <person name="Vysotskaia V.S."/>
            <person name="Walker M."/>
            <person name="Wu D."/>
            <person name="Yu G."/>
            <person name="Fraser C.M."/>
            <person name="Venter J.C."/>
            <person name="Davis R.W."/>
        </authorList>
    </citation>
    <scope>NUCLEOTIDE SEQUENCE [LARGE SCALE GENOMIC DNA]</scope>
    <source>
        <strain>cv. Columbia</strain>
    </source>
</reference>
<reference key="2">
    <citation type="journal article" date="2017" name="Plant J.">
        <title>Araport11: a complete reannotation of the Arabidopsis thaliana reference genome.</title>
        <authorList>
            <person name="Cheng C.Y."/>
            <person name="Krishnakumar V."/>
            <person name="Chan A.P."/>
            <person name="Thibaud-Nissen F."/>
            <person name="Schobel S."/>
            <person name="Town C.D."/>
        </authorList>
    </citation>
    <scope>GENOME REANNOTATION</scope>
    <source>
        <strain>cv. Columbia</strain>
    </source>
</reference>
<reference key="3">
    <citation type="journal article" date="2003" name="Science">
        <title>Empirical analysis of transcriptional activity in the Arabidopsis genome.</title>
        <authorList>
            <person name="Yamada K."/>
            <person name="Lim J."/>
            <person name="Dale J.M."/>
            <person name="Chen H."/>
            <person name="Shinn P."/>
            <person name="Palm C.J."/>
            <person name="Southwick A.M."/>
            <person name="Wu H.C."/>
            <person name="Kim C.J."/>
            <person name="Nguyen M."/>
            <person name="Pham P.K."/>
            <person name="Cheuk R.F."/>
            <person name="Karlin-Newmann G."/>
            <person name="Liu S.X."/>
            <person name="Lam B."/>
            <person name="Sakano H."/>
            <person name="Wu T."/>
            <person name="Yu G."/>
            <person name="Miranda M."/>
            <person name="Quach H.L."/>
            <person name="Tripp M."/>
            <person name="Chang C.H."/>
            <person name="Lee J.M."/>
            <person name="Toriumi M.J."/>
            <person name="Chan M.M."/>
            <person name="Tang C.C."/>
            <person name="Onodera C.S."/>
            <person name="Deng J.M."/>
            <person name="Akiyama K."/>
            <person name="Ansari Y."/>
            <person name="Arakawa T."/>
            <person name="Banh J."/>
            <person name="Banno F."/>
            <person name="Bowser L."/>
            <person name="Brooks S.Y."/>
            <person name="Carninci P."/>
            <person name="Chao Q."/>
            <person name="Choy N."/>
            <person name="Enju A."/>
            <person name="Goldsmith A.D."/>
            <person name="Gurjal M."/>
            <person name="Hansen N.F."/>
            <person name="Hayashizaki Y."/>
            <person name="Johnson-Hopson C."/>
            <person name="Hsuan V.W."/>
            <person name="Iida K."/>
            <person name="Karnes M."/>
            <person name="Khan S."/>
            <person name="Koesema E."/>
            <person name="Ishida J."/>
            <person name="Jiang P.X."/>
            <person name="Jones T."/>
            <person name="Kawai J."/>
            <person name="Kamiya A."/>
            <person name="Meyers C."/>
            <person name="Nakajima M."/>
            <person name="Narusaka M."/>
            <person name="Seki M."/>
            <person name="Sakurai T."/>
            <person name="Satou M."/>
            <person name="Tamse R."/>
            <person name="Vaysberg M."/>
            <person name="Wallender E.K."/>
            <person name="Wong C."/>
            <person name="Yamamura Y."/>
            <person name="Yuan S."/>
            <person name="Shinozaki K."/>
            <person name="Davis R.W."/>
            <person name="Theologis A."/>
            <person name="Ecker J.R."/>
        </authorList>
    </citation>
    <scope>NUCLEOTIDE SEQUENCE [LARGE SCALE MRNA]</scope>
    <source>
        <strain>cv. Columbia</strain>
    </source>
</reference>
<reference key="4">
    <citation type="submission" date="2005-03" db="EMBL/GenBank/DDBJ databases">
        <title>Large-scale analysis of RIKEN Arabidopsis full-length (RAFL) cDNAs.</title>
        <authorList>
            <person name="Totoki Y."/>
            <person name="Seki M."/>
            <person name="Ishida J."/>
            <person name="Nakajima M."/>
            <person name="Enju A."/>
            <person name="Kamiya A."/>
            <person name="Narusaka M."/>
            <person name="Shin-i T."/>
            <person name="Nakagawa M."/>
            <person name="Sakamoto N."/>
            <person name="Oishi K."/>
            <person name="Kohara Y."/>
            <person name="Kobayashi M."/>
            <person name="Toyoda A."/>
            <person name="Sakaki Y."/>
            <person name="Sakurai T."/>
            <person name="Iida K."/>
            <person name="Akiyama K."/>
            <person name="Satou M."/>
            <person name="Toyoda T."/>
            <person name="Konagaya A."/>
            <person name="Carninci P."/>
            <person name="Kawai J."/>
            <person name="Hayashizaki Y."/>
            <person name="Shinozaki K."/>
        </authorList>
    </citation>
    <scope>NUCLEOTIDE SEQUENCE [LARGE SCALE MRNA] OF 1-429</scope>
    <source>
        <strain>cv. Columbia</strain>
    </source>
</reference>
<reference key="5">
    <citation type="journal article" date="2009" name="J. Proteomics">
        <title>Phosphoproteomic analysis of nuclei-enriched fractions from Arabidopsis thaliana.</title>
        <authorList>
            <person name="Jones A.M.E."/>
            <person name="MacLean D."/>
            <person name="Studholme D.J."/>
            <person name="Serna-Sanz A."/>
            <person name="Andreasson E."/>
            <person name="Rathjen J.P."/>
            <person name="Peck S.C."/>
        </authorList>
    </citation>
    <scope>PHOSPHORYLATION [LARGE SCALE ANALYSIS] AT SER-530</scope>
    <scope>IDENTIFICATION BY MASS SPECTROMETRY [LARGE SCALE ANALYSIS]</scope>
    <source>
        <strain>cv. Columbia</strain>
    </source>
</reference>
<reference key="6">
    <citation type="journal article" date="2009" name="Plant Physiol.">
        <title>Large-scale Arabidopsis phosphoproteome profiling reveals novel chloroplast kinase substrates and phosphorylation networks.</title>
        <authorList>
            <person name="Reiland S."/>
            <person name="Messerli G."/>
            <person name="Baerenfaller K."/>
            <person name="Gerrits B."/>
            <person name="Endler A."/>
            <person name="Grossmann J."/>
            <person name="Gruissem W."/>
            <person name="Baginsky S."/>
        </authorList>
    </citation>
    <scope>PHOSPHORYLATION [LARGE SCALE ANALYSIS] AT SER-218</scope>
    <scope>IDENTIFICATION BY MASS SPECTROMETRY [LARGE SCALE ANALYSIS]</scope>
</reference>
<reference key="7">
    <citation type="journal article" date="2014" name="Curr. Biol.">
        <title>A unique plant ESCRT component, FREE1, regulates multivesicular body protein sorting and plant growth.</title>
        <authorList>
            <person name="Gao C."/>
            <person name="Luo M."/>
            <person name="Zhao Q."/>
            <person name="Yang R."/>
            <person name="Cui Y."/>
            <person name="Zeng Y."/>
            <person name="Xia J."/>
            <person name="Jiang L."/>
        </authorList>
    </citation>
    <scope>FUNCTION</scope>
    <scope>DOMAIN</scope>
    <scope>SUBCELLULAR LOCATION</scope>
    <scope>TISSUE SPECIFICITY</scope>
    <scope>DISRUPTION PHENOTYPE</scope>
    <scope>IDENTIFICATION IN THE ESCRT-I COMPLEX</scope>
    <scope>INTERACTION WITH VPS23A AND VPS23B</scope>
    <scope>MUTAGENESIS OF PRO-32; PRO-33; PRO-35; PRO-83 AND PRO-86</scope>
</reference>
<reference key="8">
    <citation type="journal article" date="2014" name="Proc. Natl. Acad. Sci. U.S.A.">
        <title>Polarization of IRON-REGULATED TRANSPORTER 1 (IRT1) to the plant-soil interface plays crucial role in metal homeostasis.</title>
        <authorList>
            <person name="Barberon M."/>
            <person name="Dubeaux G."/>
            <person name="Kolb C."/>
            <person name="Isono E."/>
            <person name="Zelazny E."/>
            <person name="Vert G."/>
        </authorList>
    </citation>
    <scope>FUNCTION</scope>
    <scope>INTERACTION WITH IRT1</scope>
    <scope>INDUCTION</scope>
    <scope>SUBCELLULAR LOCATION</scope>
</reference>
<reference key="9">
    <citation type="journal article" date="2015" name="Plant Physiol.">
        <title>FYVE1 is essential for vacuole biogenesis and intracellular trafficking in Arabidopsis.</title>
        <authorList>
            <person name="Kolb C."/>
            <person name="Nagel M.K."/>
            <person name="Kalinowska K."/>
            <person name="Hagmann J."/>
            <person name="Ichikawa M."/>
            <person name="Anzenberger F."/>
            <person name="Alkofer A."/>
            <person name="Sato M.H."/>
            <person name="Braun P."/>
            <person name="Isono E."/>
        </authorList>
    </citation>
    <scope>FUNCTION</scope>
    <scope>DISRUPTION PHENOTYPE</scope>
    <scope>SUBCELLULAR LOCATION</scope>
    <scope>INTERACTION WITH SH3P2 AND SH3P3</scope>
</reference>
<reference key="10">
    <citation type="journal article" date="2015" name="Proc. Natl. Acad. Sci. U.S.A.">
        <title>Dual roles of an Arabidopsis ESCRT component FREE1 in regulating vacuolar protein transport and autophagic degradation.</title>
        <authorList>
            <person name="Gao C."/>
            <person name="Zhuang X."/>
            <person name="Cui Y."/>
            <person name="Fu X."/>
            <person name="He Y."/>
            <person name="Zhao Q."/>
            <person name="Zeng Y."/>
            <person name="Shen J."/>
            <person name="Luo M."/>
            <person name="Jiang L."/>
        </authorList>
    </citation>
    <scope>FUNCTION</scope>
    <scope>INTERACTION WITH SH3P2</scope>
    <scope>IDENTIFICATION IN A PI3K COMPLEX</scope>
</reference>
<reference key="11">
    <citation type="journal article" date="2016" name="Plant Cell">
        <title>FYVE1/FREE1 interacts with the PYL4 ABA receptor and mediates its delivery to the vacuolar degradation pathway.</title>
        <authorList>
            <person name="Belda-Palazon B."/>
            <person name="Rodriguez L."/>
            <person name="Fernandez M.A."/>
            <person name="Castillo M.-C."/>
            <person name="Anderson E.M."/>
            <person name="Gao C."/>
            <person name="Gonzalez-Guzman M."/>
            <person name="Peirats-Llobet M."/>
            <person name="Zhao Q."/>
            <person name="De Winne N."/>
            <person name="Gevaert K."/>
            <person name="De Jaeger G."/>
            <person name="Jiang L."/>
            <person name="Leon J."/>
            <person name="Mullen R.T."/>
            <person name="Rodriguez P.L."/>
        </authorList>
    </citation>
    <scope>FUNCTION</scope>
    <scope>DISRUPTION PHENOTYPE</scope>
    <scope>INTERACTION WITH PYL4 AND PYR1</scope>
    <scope>SUBCELLULAR LOCATION</scope>
    <source>
        <strain>cv. Columbia</strain>
    </source>
</reference>
<reference key="12">
    <citation type="journal article" date="2019" name="Nat. Plants">
        <title>The plant ESCRT component FREE1 shuttles to the nucleus to attenuate abscisic acid signalling.</title>
        <authorList>
            <person name="Li H."/>
            <person name="Li Y."/>
            <person name="Zhao Q."/>
            <person name="Li T."/>
            <person name="Wei J."/>
            <person name="Li B."/>
            <person name="Shen W."/>
            <person name="Yang C."/>
            <person name="Zeng Y."/>
            <person name="Rodriguez P.L."/>
            <person name="Zhao Y."/>
            <person name="Jiang L."/>
            <person name="Wang X."/>
            <person name="Gao C."/>
        </authorList>
    </citation>
    <scope>FUNCTION</scope>
    <scope>INTERACTION WITH SNRK2D; SNRK2I; ABF4 AND ABI5</scope>
    <scope>SUBCELLULAR LOCATION</scope>
    <scope>PHOSPHORYLATION AT SER-530 AND SER-533</scope>
    <scope>MUTAGENESIS OF LEU-338; LEU-341; MET-343; SER-530 AND SER-533</scope>
</reference>
<reference key="13">
    <citation type="journal article" date="2020" name="J. Integr. Plant Biol.">
        <title>SINAT E3 ligases regulate the stability of the ESCRT component FREE1 in response to iron deficiency in plants.</title>
        <authorList>
            <person name="Xiao Z."/>
            <person name="Yang C."/>
            <person name="Liu C."/>
            <person name="Yang L."/>
            <person name="Yang S."/>
            <person name="Zhou J."/>
            <person name="Li F."/>
            <person name="Jiang L."/>
            <person name="Xiao S."/>
            <person name="Gao C."/>
            <person name="Shen W."/>
        </authorList>
    </citation>
    <scope>INTERACTION WITH SINAT1; SINAT2; SINAT3; SINAT4 AND SINAT5</scope>
    <scope>SUBCELLULAR LOCATION</scope>
    <scope>UBIQUITINATION</scope>
</reference>
<reference key="14">
    <citation type="journal article" date="2020" name="Plant Cell">
        <title>SINAT E3 ubiquitin ligases mediate FREE1 and VPS23A degradation to modulate abscisic acid signaling.</title>
        <authorList>
            <person name="Xia F.N."/>
            <person name="Zeng B."/>
            <person name="Liu H.S."/>
            <person name="Qi H."/>
            <person name="Xie L.J."/>
            <person name="Yu L.J."/>
            <person name="Chen Q.F."/>
            <person name="Li J.F."/>
            <person name="Chen Y.Q."/>
            <person name="Jiang L."/>
            <person name="Xiao S."/>
        </authorList>
    </citation>
    <scope>INTERACTION WITH SINAT1; SINAT2; SINAT3 AND SINAT4</scope>
    <scope>UBIQUITINATION</scope>
</reference>
<reference key="15">
    <citation type="journal article" date="2020" name="Plant Sci.">
        <title>The effect of ABRE BINDING FACTOR 4-mediated FYVE1 on salt stress tolerance in Arabidopsis.</title>
        <authorList>
            <person name="Pan W."/>
            <person name="Zheng P."/>
            <person name="Zhang C."/>
            <person name="Wang W."/>
            <person name="Li Y."/>
            <person name="Fan T."/>
            <person name="Liu Y."/>
            <person name="Cao S."/>
        </authorList>
    </citation>
    <scope>FUNCTION</scope>
    <scope>INDUCTION</scope>
</reference>
<keyword id="KW-0938">Abscisic acid signaling pathway</keyword>
<keyword id="KW-0175">Coiled coil</keyword>
<keyword id="KW-0963">Cytoplasm</keyword>
<keyword id="KW-0967">Endosome</keyword>
<keyword id="KW-0472">Membrane</keyword>
<keyword id="KW-0479">Metal-binding</keyword>
<keyword id="KW-0539">Nucleus</keyword>
<keyword id="KW-0597">Phosphoprotein</keyword>
<keyword id="KW-0653">Protein transport</keyword>
<keyword id="KW-1185">Reference proteome</keyword>
<keyword id="KW-0813">Transport</keyword>
<keyword id="KW-0832">Ubl conjugation</keyword>
<keyword id="KW-0862">Zinc</keyword>
<keyword id="KW-0863">Zinc-finger</keyword>
<proteinExistence type="evidence at protein level"/>
<organism evidence="19">
    <name type="scientific">Arabidopsis thaliana</name>
    <name type="common">Mouse-ear cress</name>
    <dbReference type="NCBI Taxonomy" id="3702"/>
    <lineage>
        <taxon>Eukaryota</taxon>
        <taxon>Viridiplantae</taxon>
        <taxon>Streptophyta</taxon>
        <taxon>Embryophyta</taxon>
        <taxon>Tracheophyta</taxon>
        <taxon>Spermatophyta</taxon>
        <taxon>Magnoliopsida</taxon>
        <taxon>eudicotyledons</taxon>
        <taxon>Gunneridae</taxon>
        <taxon>Pentapetalae</taxon>
        <taxon>rosids</taxon>
        <taxon>malvids</taxon>
        <taxon>Brassicales</taxon>
        <taxon>Brassicaceae</taxon>
        <taxon>Camelineae</taxon>
        <taxon>Arabidopsis</taxon>
    </lineage>
</organism>
<comment type="function">
    <text evidence="4 5 6 7 8 9 10">Endosomal sorting complex required for transport (ESCRT) component regulating multivesicular body (MVB) protein sorting and plant growth (PubMed:25438943). Required for the formation of intra-luminal vesicles (ILVs)in MVBs (PubMed:25438943). Binds to phosphatidylinositol-3-phosphate (PI3P) and ubiquitin (PubMed:24843126, PubMed:25438943). Controls IRT1 recycling to the plasma membrane and impacts the polar delivery of this transporter to the outer plasma membrane domain (PubMed:24843126). Regulates ubiquitin-dependent membrane protein degradation, vacuolar transport, autophagy, and vacuole biogenesis (PubMed:25624505, PubMed:25699591). ESCRT component that binds ubiquitin and regulates vacuolar sorting of proteins (PubMed:27495812). Attenuates abscisic acid (ABA) signaling through RSL1-triggered degradation of the ABA receptors PYR1 and PYL4 (PubMed:27495812). Interacts with PYL4 and PYR1, and delivers the ubiquitinated ABA receptors as cargo to the vacuolar degradation pathway (PubMed:27495812). In response to ABA, is phosphorylated by SnRK2 kinases which mediate FREE1 nuclear import (PubMed:30962512). In the nucleus, interacts with the ABA-responsive transcription factors ABF4 and ABI5 to reduce their ability to bind to their cis-regulatory sequences of downstream genes, thus leading to transcriptional inhibition of ABA signaling pathway (PubMed:30962512). Negatively regulates salt stress tolerance via a negative feedback loop involving ABA signaling pathway (PubMed:32540007).</text>
</comment>
<comment type="subunit">
    <text evidence="4 5 6 7 8 9 11 12">Part of the ESCRT-I complex (PubMed:25438943). Interacts with VPS23A and VPS23B, but not with VPS28 or VPS37 (PubMed:25438943). Interacts with IRT1 (PubMed:24843126). Interacts with SH3P2 (PubMed:25624505, PubMed:25699591). Interacts with SH3P3, but not with SH3P1 (PubMed:25699591). Interacts (via N-terminus) with PYL4 and PYR3 (PubMed:27495812). Interacts (via C-terminus) with SNRK2D/SNRK2.2, SNRK2I/SNRK2.3, ABF4 and ABI5 (PubMed:30962512). Interacts with SINAT1, SINAT2, SINAT3 and SINAT4 (PubMed:32753431, PubMed:32786047). Interacts with SINAT5 (PubMed:32786047). Component of a phosphoinositide 3-kinase (PI3K) complex containing ATG6, SH3P2 and FREE1 (PubMed:25624505).</text>
</comment>
<comment type="subcellular location">
    <subcellularLocation>
        <location evidence="4 5 7 9">Cytoplasm</location>
    </subcellularLocation>
    <subcellularLocation>
        <location evidence="5 8">Prevacuolar compartment membrane</location>
        <topology evidence="5">Peripheral membrane protein</topology>
    </subcellularLocation>
    <subcellularLocation>
        <location evidence="4 7 8">Late endosome</location>
    </subcellularLocation>
    <subcellularLocation>
        <location evidence="12">Endosome</location>
        <location evidence="12">Multivesicular body</location>
    </subcellularLocation>
    <subcellularLocation>
        <location evidence="4 9">Nucleus</location>
    </subcellularLocation>
    <text evidence="9">In response to abscisic acid (ABA), SnRK2 kinases phosphorylate FREE1, a step requisite for ABA-induced FREE1 nuclear import.</text>
</comment>
<comment type="tissue specificity">
    <text evidence="5">Ubiquitous. Lowest expression in mature seeds.</text>
</comment>
<comment type="induction">
    <text evidence="4 10">Not regulated by iron starvation (PubMed:24843126). Induced by abscisic acid (ABA), salt stress and osmotic stress (PubMed:32540007).</text>
</comment>
<comment type="domain">
    <text evidence="5 6">The FYVE domain is required for PI3P binding (PubMed:25438943). The N-terminal domain (31-86) is required for the interaction with VPS23A and B (PubMed:25438943). The C-terminal domain (515-601) is required for the binding to ubiquitin (PubMed:25438943). The C-terminal coiled-coil region is required for the interaction with SH3P2 (PubMed:25624505).</text>
</comment>
<comment type="PTM">
    <text evidence="9">Phosphorylated at Ser-530 and Ser-533 by SNRK2D/SNRK2.2 and SNRK2I/SNRK2.3 in response to abscisic acid (ABA) (PubMed:30962512). Phosphorylation is necessary for ABA-induced FREE1 nuclear import (PubMed:30962512).</text>
</comment>
<comment type="PTM">
    <text evidence="11 12">Ubiquitinated by SINAT1, SINAT2, SINAT3 and SINAT4 for subsequent proteasomal degradation.</text>
</comment>
<comment type="disruption phenotype">
    <text evidence="5 7 8">Seedling lethality when homozygous (PubMed:25438943, PubMed:25699591). Degenerated root surface structures and vacuoles with altered morphology (PubMed:25699591). Accumulation of ubiquitinated membrane-associated proteins (PubMed:25699591). Hypersensitivity to abscisic acid (ABA) due to impaired targeting of ABA receptors (e.g. PYL4 and PYR1) for vacuolar degradation, thus leading to their accumulation and an enhanced response to ABA (PubMed:27495812).</text>
</comment>
<comment type="miscellaneous">
    <text evidence="8 10">Reduction-of-function FREE1 alleles exhibit enhanced sensitivity to abscisic acid-mediated inhibition of seedling establishment (PubMed:27495812). Seedlings overexpressing FREE1 exhibit increased sensitivity to salt stress (PubMed:32540007).</text>
</comment>
<comment type="sequence caution" evidence="15">
    <conflict type="erroneous gene model prediction">
        <sequence resource="EMBL-CDS" id="AAF79901"/>
    </conflict>
    <text>The predicted gene At1g20110 has been split into 2 genes: At1g20110 and At1g20120.</text>
</comment>
<feature type="chain" id="PRO_0000434149" description="Protein FREE1">
    <location>
        <begin position="1"/>
        <end position="601"/>
    </location>
</feature>
<feature type="zinc finger region" description="FYVE-type" evidence="2">
    <location>
        <begin position="455"/>
        <end position="515"/>
    </location>
</feature>
<feature type="region of interest" description="Disordered" evidence="3">
    <location>
        <begin position="1"/>
        <end position="240"/>
    </location>
</feature>
<feature type="region of interest" description="Nuclear export signal" evidence="16">
    <location>
        <begin position="338"/>
        <end position="344"/>
    </location>
</feature>
<feature type="region of interest" description="Disordered" evidence="3">
    <location>
        <begin position="542"/>
        <end position="561"/>
    </location>
</feature>
<feature type="coiled-coil region" evidence="1">
    <location>
        <begin position="527"/>
        <end position="552"/>
    </location>
</feature>
<feature type="compositionally biased region" description="Pro residues" evidence="3">
    <location>
        <begin position="21"/>
        <end position="35"/>
    </location>
</feature>
<feature type="compositionally biased region" description="Polar residues" evidence="3">
    <location>
        <begin position="63"/>
        <end position="79"/>
    </location>
</feature>
<feature type="compositionally biased region" description="Polar residues" evidence="3">
    <location>
        <begin position="125"/>
        <end position="155"/>
    </location>
</feature>
<feature type="compositionally biased region" description="Pro residues" evidence="3">
    <location>
        <begin position="161"/>
        <end position="175"/>
    </location>
</feature>
<feature type="compositionally biased region" description="Low complexity" evidence="3">
    <location>
        <begin position="176"/>
        <end position="197"/>
    </location>
</feature>
<feature type="compositionally biased region" description="Basic and acidic residues" evidence="3">
    <location>
        <begin position="214"/>
        <end position="231"/>
    </location>
</feature>
<feature type="binding site" evidence="2">
    <location>
        <position position="461"/>
    </location>
    <ligand>
        <name>Zn(2+)</name>
        <dbReference type="ChEBI" id="CHEBI:29105"/>
        <label>1</label>
    </ligand>
</feature>
<feature type="binding site" evidence="2">
    <location>
        <position position="464"/>
    </location>
    <ligand>
        <name>Zn(2+)</name>
        <dbReference type="ChEBI" id="CHEBI:29105"/>
        <label>1</label>
    </ligand>
</feature>
<feature type="binding site" evidence="2">
    <location>
        <position position="477"/>
    </location>
    <ligand>
        <name>Zn(2+)</name>
        <dbReference type="ChEBI" id="CHEBI:29105"/>
        <label>2</label>
    </ligand>
</feature>
<feature type="binding site" evidence="2">
    <location>
        <position position="480"/>
    </location>
    <ligand>
        <name>Zn(2+)</name>
        <dbReference type="ChEBI" id="CHEBI:29105"/>
        <label>2</label>
    </ligand>
</feature>
<feature type="binding site" evidence="2">
    <location>
        <position position="485"/>
    </location>
    <ligand>
        <name>Zn(2+)</name>
        <dbReference type="ChEBI" id="CHEBI:29105"/>
        <label>1</label>
    </ligand>
</feature>
<feature type="binding site" evidence="2">
    <location>
        <position position="488"/>
    </location>
    <ligand>
        <name>Zn(2+)</name>
        <dbReference type="ChEBI" id="CHEBI:29105"/>
        <label>1</label>
    </ligand>
</feature>
<feature type="binding site" evidence="2">
    <location>
        <position position="507"/>
    </location>
    <ligand>
        <name>Zn(2+)</name>
        <dbReference type="ChEBI" id="CHEBI:29105"/>
        <label>2</label>
    </ligand>
</feature>
<feature type="binding site" evidence="2">
    <location>
        <position position="510"/>
    </location>
    <ligand>
        <name>Zn(2+)</name>
        <dbReference type="ChEBI" id="CHEBI:29105"/>
        <label>2</label>
    </ligand>
</feature>
<feature type="modified residue" description="Phosphoserine" evidence="21">
    <location>
        <position position="218"/>
    </location>
</feature>
<feature type="modified residue" description="Phosphoserine" evidence="9 20">
    <location>
        <position position="530"/>
    </location>
</feature>
<feature type="modified residue" description="Phosphoserine" evidence="9">
    <location>
        <position position="533"/>
    </location>
</feature>
<feature type="mutagenesis site" description="Loss of interactions with VPS23A and VPS23B; when associated with A-33; A-35; A-83 and A-86." evidence="5">
    <original>P</original>
    <variation>A</variation>
    <location>
        <position position="32"/>
    </location>
</feature>
<feature type="mutagenesis site" description="Loss of interactions with VPS23A and VPS23B; when associated with A-32; A-35; A-83 and A-86." evidence="5">
    <original>P</original>
    <variation>A</variation>
    <location>
        <position position="33"/>
    </location>
</feature>
<feature type="mutagenesis site" description="Loss of interactions with VPS23A and VPS23B; when associated with A-32; A-33; A-83 and A-86." evidence="5">
    <original>P</original>
    <variation>A</variation>
    <location>
        <position position="35"/>
    </location>
</feature>
<feature type="mutagenesis site" description="Loss of interactions with VPS23A and VPS23B; when associated with A-32; A-33; A-35 and A-86." evidence="5">
    <original>P</original>
    <variation>A</variation>
    <location>
        <position position="83"/>
    </location>
</feature>
<feature type="mutagenesis site" description="Loss of interactions with VPS23A and VPS23B; when associated with A-32; A-33; A-35 and A-83." evidence="5">
    <original>P</original>
    <variation>A</variation>
    <location>
        <position position="86"/>
    </location>
</feature>
<feature type="mutagenesis site" description="Localizes predominantly to the nucleus; when associated with A-338 and A-343." evidence="9">
    <original>L</original>
    <variation>A</variation>
    <location>
        <position position="341"/>
    </location>
</feature>
<feature type="mutagenesis site" description="Localizes predominantly to the nucleus; when associated with A-338 and A-341." evidence="9">
    <original>M</original>
    <variation>A</variation>
    <location>
        <position position="343"/>
    </location>
</feature>
<feature type="mutagenesis site" description="Abolishes phosphorylation; abolishes abscisic acid-induced nuclear import; when associated with A-533." evidence="9">
    <original>S</original>
    <variation>A</variation>
    <location>
        <position position="530"/>
    </location>
</feature>
<feature type="mutagenesis site" description="Mimicks constitutive phosphorylation; accumulates in the nucleus in the absence of abscisic acid treatment; when associated with D-533." evidence="9">
    <original>S</original>
    <variation>D</variation>
    <location>
        <position position="530"/>
    </location>
</feature>
<feature type="mutagenesis site" description="Abolishes phosphorylation; abolishes abscisic acid-induced nuclear import; when associated with A-530." evidence="9">
    <original>S</original>
    <variation>A</variation>
    <location>
        <position position="533"/>
    </location>
</feature>
<feature type="mutagenesis site" description="Mimicks constitutive phosphorylation; accumulates in the nucleus in the absence of abscisic acid treatment; when associated with D-530.">
    <original>S</original>
    <variation>D</variation>
    <location>
        <position position="533"/>
    </location>
</feature>
<gene>
    <name evidence="14" type="primary">FREE1</name>
    <name evidence="13" type="synonym">FYVE1</name>
    <name evidence="17" type="ordered locus">At1g20110</name>
    <name evidence="18" type="ORF">T20H2.10</name>
</gene>
<protein>
    <recommendedName>
        <fullName evidence="14">Protein FREE1</fullName>
    </recommendedName>
    <alternativeName>
        <fullName evidence="13">FYVE domain protein required for endosomal sorting 1</fullName>
    </alternativeName>
    <alternativeName>
        <fullName evidence="13">FYVE domain-containing protein 1</fullName>
    </alternativeName>
</protein>
<sequence>MQQGDYNSYYHHQYSQFQNPTPNPNPNPNPSPPAPATVAGPTDLTRNTYASAPPFTGGYGSADYSNYSQNYTPYGQNSEHVPPSAPSFTSPSQPPPSPPATSLNPNSYSTFNQPPPPPTIHPQPLSSYGSFDSTAPYQQPTSQHMYYSPYDQHQTSGYSSAPPPSSAPAPNPNPAPYSSSLYSAPPYSSGGSSIPPSYEKPSVKFDQSGYDGYNRSRSDLGSDLYGKRSDSGEYPAFEDSYGDGVYAYQGGKVEPYGSRGTAPKSSNSTLFDDYGRSISFSSSGRDSSVSSNSAKIVRAVPKADVQEDSTGGVQKFRVKLLAETYGQTTTDVLCQIGLDGLRMLDPSTSRTLRIYPLENITRCEKLDSSILAFWSKTPVDIEAKRIRLQSNSYTTNTLLDTVTAAMFQAKEIGGSSRPPTSGKLIEQTAEKKKGLGDWMNIIKPVNEEKDHWVPDEAVSKCTSCGSDFGAFIRRHHCRNCGDVFCDKCTQGRIALTAEDNAPQVRVCDRCMAEVSQRLSNAKETTGRNVSLQSHEDLARKLQEEMERNRKSSSGLREGSGRRMKEVACPTCTVHLQVQVPVSGSETIECGVCQNPFLVSAH</sequence>
<evidence type="ECO:0000255" key="1"/>
<evidence type="ECO:0000255" key="2">
    <source>
        <dbReference type="PROSITE-ProRule" id="PRU00091"/>
    </source>
</evidence>
<evidence type="ECO:0000256" key="3">
    <source>
        <dbReference type="SAM" id="MobiDB-lite"/>
    </source>
</evidence>
<evidence type="ECO:0000269" key="4">
    <source>
    </source>
</evidence>
<evidence type="ECO:0000269" key="5">
    <source>
    </source>
</evidence>
<evidence type="ECO:0000269" key="6">
    <source>
    </source>
</evidence>
<evidence type="ECO:0000269" key="7">
    <source>
    </source>
</evidence>
<evidence type="ECO:0000269" key="8">
    <source>
    </source>
</evidence>
<evidence type="ECO:0000269" key="9">
    <source>
    </source>
</evidence>
<evidence type="ECO:0000269" key="10">
    <source>
    </source>
</evidence>
<evidence type="ECO:0000269" key="11">
    <source>
    </source>
</evidence>
<evidence type="ECO:0000269" key="12">
    <source>
    </source>
</evidence>
<evidence type="ECO:0000303" key="13">
    <source>
    </source>
</evidence>
<evidence type="ECO:0000303" key="14">
    <source>
    </source>
</evidence>
<evidence type="ECO:0000305" key="15"/>
<evidence type="ECO:0000305" key="16">
    <source>
    </source>
</evidence>
<evidence type="ECO:0000312" key="17">
    <source>
        <dbReference type="Araport" id="AT1G20110"/>
    </source>
</evidence>
<evidence type="ECO:0000312" key="18">
    <source>
        <dbReference type="EMBL" id="AAF79901.1"/>
    </source>
</evidence>
<evidence type="ECO:0000312" key="19">
    <source>
        <dbReference type="EMBL" id="AAK32902.1"/>
    </source>
</evidence>
<evidence type="ECO:0007744" key="20">
    <source>
    </source>
</evidence>
<evidence type="ECO:0007744" key="21">
    <source>
    </source>
</evidence>
<dbReference type="EMBL" id="AC022472">
    <property type="protein sequence ID" value="AAF79901.1"/>
    <property type="status" value="ALT_SEQ"/>
    <property type="molecule type" value="Genomic_DNA"/>
</dbReference>
<dbReference type="EMBL" id="CP002684">
    <property type="protein sequence ID" value="AEE29937.1"/>
    <property type="molecule type" value="Genomic_DNA"/>
</dbReference>
<dbReference type="EMBL" id="AF367315">
    <property type="protein sequence ID" value="AAK32902.1"/>
    <property type="molecule type" value="mRNA"/>
</dbReference>
<dbReference type="EMBL" id="AF428277">
    <property type="protein sequence ID" value="AAL16109.1"/>
    <property type="molecule type" value="mRNA"/>
</dbReference>
<dbReference type="EMBL" id="AY143942">
    <property type="protein sequence ID" value="AAN28881.1"/>
    <property type="molecule type" value="mRNA"/>
</dbReference>
<dbReference type="EMBL" id="AY054543">
    <property type="protein sequence ID" value="AAK96734.1"/>
    <property type="molecule type" value="mRNA"/>
</dbReference>
<dbReference type="EMBL" id="AK221672">
    <property type="protein sequence ID" value="BAD95359.1"/>
    <property type="molecule type" value="mRNA"/>
</dbReference>
<dbReference type="RefSeq" id="NP_564103.1">
    <property type="nucleotide sequence ID" value="NM_101865.4"/>
</dbReference>
<dbReference type="SMR" id="Q9ASS2"/>
<dbReference type="FunCoup" id="Q9ASS2">
    <property type="interactions" value="3077"/>
</dbReference>
<dbReference type="IntAct" id="Q9ASS2">
    <property type="interactions" value="1"/>
</dbReference>
<dbReference type="STRING" id="3702.Q9ASS2"/>
<dbReference type="iPTMnet" id="Q9ASS2"/>
<dbReference type="PaxDb" id="3702-AT1G20110.1"/>
<dbReference type="ProteomicsDB" id="228943"/>
<dbReference type="EnsemblPlants" id="AT1G20110.1">
    <property type="protein sequence ID" value="AT1G20110.1"/>
    <property type="gene ID" value="AT1G20110"/>
</dbReference>
<dbReference type="GeneID" id="838600"/>
<dbReference type="Gramene" id="AT1G20110.1">
    <property type="protein sequence ID" value="AT1G20110.1"/>
    <property type="gene ID" value="AT1G20110"/>
</dbReference>
<dbReference type="KEGG" id="ath:AT1G20110"/>
<dbReference type="Araport" id="AT1G20110"/>
<dbReference type="TAIR" id="AT1G20110">
    <property type="gene designation" value="FYVE1"/>
</dbReference>
<dbReference type="eggNOG" id="KOG1729">
    <property type="taxonomic scope" value="Eukaryota"/>
</dbReference>
<dbReference type="HOGENOM" id="CLU_012981_2_0_1"/>
<dbReference type="InParanoid" id="Q9ASS2"/>
<dbReference type="OMA" id="YENRDSF"/>
<dbReference type="PhylomeDB" id="Q9ASS2"/>
<dbReference type="PRO" id="PR:Q9ASS2"/>
<dbReference type="Proteomes" id="UP000006548">
    <property type="component" value="Chromosome 1"/>
</dbReference>
<dbReference type="ExpressionAtlas" id="Q9ASS2">
    <property type="expression patterns" value="baseline and differential"/>
</dbReference>
<dbReference type="GO" id="GO:0000813">
    <property type="term" value="C:ESCRT I complex"/>
    <property type="evidence" value="ECO:0000353"/>
    <property type="project" value="TAIR"/>
</dbReference>
<dbReference type="GO" id="GO:0031902">
    <property type="term" value="C:late endosome membrane"/>
    <property type="evidence" value="ECO:0000314"/>
    <property type="project" value="TAIR"/>
</dbReference>
<dbReference type="GO" id="GO:0005771">
    <property type="term" value="C:multivesicular body"/>
    <property type="evidence" value="ECO:0007669"/>
    <property type="project" value="UniProtKB-SubCell"/>
</dbReference>
<dbReference type="GO" id="GO:0005634">
    <property type="term" value="C:nucleus"/>
    <property type="evidence" value="ECO:0007005"/>
    <property type="project" value="TAIR"/>
</dbReference>
<dbReference type="GO" id="GO:0003729">
    <property type="term" value="F:mRNA binding"/>
    <property type="evidence" value="ECO:0007005"/>
    <property type="project" value="TAIR"/>
</dbReference>
<dbReference type="GO" id="GO:0043130">
    <property type="term" value="F:ubiquitin binding"/>
    <property type="evidence" value="ECO:0000314"/>
    <property type="project" value="TAIR"/>
</dbReference>
<dbReference type="GO" id="GO:0008270">
    <property type="term" value="F:zinc ion binding"/>
    <property type="evidence" value="ECO:0007669"/>
    <property type="project" value="UniProtKB-KW"/>
</dbReference>
<dbReference type="GO" id="GO:0009738">
    <property type="term" value="P:abscisic acid-activated signaling pathway"/>
    <property type="evidence" value="ECO:0007669"/>
    <property type="project" value="UniProtKB-KW"/>
</dbReference>
<dbReference type="GO" id="GO:0070676">
    <property type="term" value="P:intralumenal vesicle formation"/>
    <property type="evidence" value="ECO:0000315"/>
    <property type="project" value="TAIR"/>
</dbReference>
<dbReference type="GO" id="GO:0036258">
    <property type="term" value="P:multivesicular body assembly"/>
    <property type="evidence" value="ECO:0000315"/>
    <property type="project" value="TAIR"/>
</dbReference>
<dbReference type="GO" id="GO:0009788">
    <property type="term" value="P:negative regulation of abscisic acid-activated signaling pathway"/>
    <property type="evidence" value="ECO:0000315"/>
    <property type="project" value="UniProtKB"/>
</dbReference>
<dbReference type="GO" id="GO:0015031">
    <property type="term" value="P:protein transport"/>
    <property type="evidence" value="ECO:0007669"/>
    <property type="project" value="UniProtKB-KW"/>
</dbReference>
<dbReference type="CDD" id="cd00934">
    <property type="entry name" value="PTB"/>
    <property type="match status" value="1"/>
</dbReference>
<dbReference type="FunFam" id="3.30.40.10:FF:000312">
    <property type="entry name" value="Zinc finger, FYVE-type, endofin"/>
    <property type="match status" value="1"/>
</dbReference>
<dbReference type="Gene3D" id="3.30.40.10">
    <property type="entry name" value="Zinc/RING finger domain, C3HC4 (zinc finger)"/>
    <property type="match status" value="1"/>
</dbReference>
<dbReference type="InterPro" id="IPR045893">
    <property type="entry name" value="FREE1"/>
</dbReference>
<dbReference type="InterPro" id="IPR000306">
    <property type="entry name" value="Znf_FYVE"/>
</dbReference>
<dbReference type="InterPro" id="IPR017455">
    <property type="entry name" value="Znf_FYVE-rel"/>
</dbReference>
<dbReference type="InterPro" id="IPR011011">
    <property type="entry name" value="Znf_FYVE_PHD"/>
</dbReference>
<dbReference type="InterPro" id="IPR013083">
    <property type="entry name" value="Znf_RING/FYVE/PHD"/>
</dbReference>
<dbReference type="PANTHER" id="PTHR46977">
    <property type="entry name" value="PROTEIN FREE1"/>
    <property type="match status" value="1"/>
</dbReference>
<dbReference type="PANTHER" id="PTHR46977:SF1">
    <property type="entry name" value="PROTEIN FREE1"/>
    <property type="match status" value="1"/>
</dbReference>
<dbReference type="Pfam" id="PF01363">
    <property type="entry name" value="FYVE"/>
    <property type="match status" value="1"/>
</dbReference>
<dbReference type="SMART" id="SM00064">
    <property type="entry name" value="FYVE"/>
    <property type="match status" value="1"/>
</dbReference>
<dbReference type="SUPFAM" id="SSF57903">
    <property type="entry name" value="FYVE/PHD zinc finger"/>
    <property type="match status" value="1"/>
</dbReference>
<dbReference type="PROSITE" id="PS50178">
    <property type="entry name" value="ZF_FYVE"/>
    <property type="match status" value="1"/>
</dbReference>